<evidence type="ECO:0000255" key="1">
    <source>
        <dbReference type="HAMAP-Rule" id="MF_00502"/>
    </source>
</evidence>
<evidence type="ECO:0000305" key="2"/>
<accession>Q1GYX9</accession>
<reference key="1">
    <citation type="submission" date="2006-03" db="EMBL/GenBank/DDBJ databases">
        <title>Complete sequence of Methylobacillus flagellatus KT.</title>
        <authorList>
            <consortium name="US DOE Joint Genome Institute"/>
            <person name="Copeland A."/>
            <person name="Lucas S."/>
            <person name="Lapidus A."/>
            <person name="Barry K."/>
            <person name="Detter J.C."/>
            <person name="Glavina del Rio T."/>
            <person name="Hammon N."/>
            <person name="Israni S."/>
            <person name="Dalin E."/>
            <person name="Tice H."/>
            <person name="Pitluck S."/>
            <person name="Brettin T."/>
            <person name="Bruce D."/>
            <person name="Han C."/>
            <person name="Tapia R."/>
            <person name="Saunders E."/>
            <person name="Gilna P."/>
            <person name="Schmutz J."/>
            <person name="Larimer F."/>
            <person name="Land M."/>
            <person name="Kyrpides N."/>
            <person name="Anderson I."/>
            <person name="Richardson P."/>
        </authorList>
    </citation>
    <scope>NUCLEOTIDE SEQUENCE [LARGE SCALE GENOMIC DNA]</scope>
    <source>
        <strain>ATCC 51484 / DSM 6875 / VKM B-1610 / KT</strain>
    </source>
</reference>
<organism>
    <name type="scientific">Methylobacillus flagellatus (strain ATCC 51484 / DSM 6875 / VKM B-1610 / KT)</name>
    <dbReference type="NCBI Taxonomy" id="265072"/>
    <lineage>
        <taxon>Bacteria</taxon>
        <taxon>Pseudomonadati</taxon>
        <taxon>Pseudomonadota</taxon>
        <taxon>Betaproteobacteria</taxon>
        <taxon>Nitrosomonadales</taxon>
        <taxon>Methylophilaceae</taxon>
        <taxon>Methylobacillus</taxon>
    </lineage>
</organism>
<dbReference type="EMBL" id="CP000284">
    <property type="protein sequence ID" value="ABE50558.1"/>
    <property type="molecule type" value="Genomic_DNA"/>
</dbReference>
<dbReference type="RefSeq" id="WP_011480512.1">
    <property type="nucleotide sequence ID" value="NC_007947.1"/>
</dbReference>
<dbReference type="SMR" id="Q1GYX9"/>
<dbReference type="STRING" id="265072.Mfla_2291"/>
<dbReference type="KEGG" id="mfa:Mfla_2291"/>
<dbReference type="eggNOG" id="COG0254">
    <property type="taxonomic scope" value="Bacteria"/>
</dbReference>
<dbReference type="HOGENOM" id="CLU_114306_2_2_4"/>
<dbReference type="OrthoDB" id="9803251at2"/>
<dbReference type="Proteomes" id="UP000002440">
    <property type="component" value="Chromosome"/>
</dbReference>
<dbReference type="GO" id="GO:1990904">
    <property type="term" value="C:ribonucleoprotein complex"/>
    <property type="evidence" value="ECO:0007669"/>
    <property type="project" value="UniProtKB-KW"/>
</dbReference>
<dbReference type="GO" id="GO:0005840">
    <property type="term" value="C:ribosome"/>
    <property type="evidence" value="ECO:0007669"/>
    <property type="project" value="UniProtKB-KW"/>
</dbReference>
<dbReference type="GO" id="GO:0003735">
    <property type="term" value="F:structural constituent of ribosome"/>
    <property type="evidence" value="ECO:0007669"/>
    <property type="project" value="InterPro"/>
</dbReference>
<dbReference type="GO" id="GO:0006412">
    <property type="term" value="P:translation"/>
    <property type="evidence" value="ECO:0007669"/>
    <property type="project" value="UniProtKB-UniRule"/>
</dbReference>
<dbReference type="Gene3D" id="4.10.830.30">
    <property type="entry name" value="Ribosomal protein L31"/>
    <property type="match status" value="1"/>
</dbReference>
<dbReference type="HAMAP" id="MF_00502">
    <property type="entry name" value="Ribosomal_bL31_2"/>
    <property type="match status" value="1"/>
</dbReference>
<dbReference type="InterPro" id="IPR034704">
    <property type="entry name" value="Ribosomal_bL28/bL31-like_sf"/>
</dbReference>
<dbReference type="InterPro" id="IPR002150">
    <property type="entry name" value="Ribosomal_bL31"/>
</dbReference>
<dbReference type="InterPro" id="IPR027493">
    <property type="entry name" value="Ribosomal_bL31_B"/>
</dbReference>
<dbReference type="InterPro" id="IPR042105">
    <property type="entry name" value="Ribosomal_bL31_sf"/>
</dbReference>
<dbReference type="NCBIfam" id="TIGR00105">
    <property type="entry name" value="L31"/>
    <property type="match status" value="1"/>
</dbReference>
<dbReference type="NCBIfam" id="NF002462">
    <property type="entry name" value="PRK01678.1"/>
    <property type="match status" value="1"/>
</dbReference>
<dbReference type="PANTHER" id="PTHR33280">
    <property type="entry name" value="50S RIBOSOMAL PROTEIN L31, CHLOROPLASTIC"/>
    <property type="match status" value="1"/>
</dbReference>
<dbReference type="PANTHER" id="PTHR33280:SF1">
    <property type="entry name" value="LARGE RIBOSOMAL SUBUNIT PROTEIN BL31C"/>
    <property type="match status" value="1"/>
</dbReference>
<dbReference type="Pfam" id="PF01197">
    <property type="entry name" value="Ribosomal_L31"/>
    <property type="match status" value="1"/>
</dbReference>
<dbReference type="PRINTS" id="PR01249">
    <property type="entry name" value="RIBOSOMALL31"/>
</dbReference>
<dbReference type="SUPFAM" id="SSF143800">
    <property type="entry name" value="L28p-like"/>
    <property type="match status" value="1"/>
</dbReference>
<dbReference type="PROSITE" id="PS01143">
    <property type="entry name" value="RIBOSOMAL_L31"/>
    <property type="match status" value="1"/>
</dbReference>
<keyword id="KW-1185">Reference proteome</keyword>
<keyword id="KW-0687">Ribonucleoprotein</keyword>
<keyword id="KW-0689">Ribosomal protein</keyword>
<name>RL31B_METFK</name>
<proteinExistence type="inferred from homology"/>
<gene>
    <name evidence="1" type="primary">rpmE2</name>
    <name type="ordered locus">Mfla_2291</name>
</gene>
<sequence>MKPGIHPEYREVVFQDIGADFSFLTRSTIAAKETIKWTDGKEYPLVKIEVSSQSHPFYTGKQKILDTAGRVEKFRQKYGM</sequence>
<comment type="subunit">
    <text evidence="1">Part of the 50S ribosomal subunit.</text>
</comment>
<comment type="similarity">
    <text evidence="1">Belongs to the bacterial ribosomal protein bL31 family. Type B subfamily.</text>
</comment>
<protein>
    <recommendedName>
        <fullName evidence="1">Large ribosomal subunit protein bL31B</fullName>
    </recommendedName>
    <alternativeName>
        <fullName evidence="2">50S ribosomal protein L31 type B</fullName>
    </alternativeName>
</protein>
<feature type="chain" id="PRO_1000014704" description="Large ribosomal subunit protein bL31B">
    <location>
        <begin position="1"/>
        <end position="80"/>
    </location>
</feature>